<feature type="chain" id="PRO_1000015044" description="Small ribosomal subunit protein uS10">
    <location>
        <begin position="1"/>
        <end position="102"/>
    </location>
</feature>
<organism>
    <name type="scientific">Leptospira borgpetersenii serovar Hardjo-bovis (strain JB197)</name>
    <dbReference type="NCBI Taxonomy" id="355277"/>
    <lineage>
        <taxon>Bacteria</taxon>
        <taxon>Pseudomonadati</taxon>
        <taxon>Spirochaetota</taxon>
        <taxon>Spirochaetia</taxon>
        <taxon>Leptospirales</taxon>
        <taxon>Leptospiraceae</taxon>
        <taxon>Leptospira</taxon>
    </lineage>
</organism>
<name>RS10_LEPBJ</name>
<comment type="function">
    <text evidence="1">Involved in the binding of tRNA to the ribosomes.</text>
</comment>
<comment type="subunit">
    <text evidence="1">Part of the 30S ribosomal subunit.</text>
</comment>
<comment type="similarity">
    <text evidence="1">Belongs to the universal ribosomal protein uS10 family.</text>
</comment>
<sequence length="102" mass="11467">MAGQKIRVKLKAFDHRLIDQSTYEIVATAKRTGATVSGPIPLPTKKEIYTVLRSPHVNKKSREQFELKTHKRLIDILDTNEDTVEALMKLQLPAGVSVDIKS</sequence>
<evidence type="ECO:0000255" key="1">
    <source>
        <dbReference type="HAMAP-Rule" id="MF_00508"/>
    </source>
</evidence>
<evidence type="ECO:0000305" key="2"/>
<gene>
    <name evidence="1" type="primary">rpsJ</name>
    <name type="ordered locus">LBJ_2660</name>
</gene>
<protein>
    <recommendedName>
        <fullName evidence="1">Small ribosomal subunit protein uS10</fullName>
    </recommendedName>
    <alternativeName>
        <fullName evidence="2">30S ribosomal protein S10</fullName>
    </alternativeName>
</protein>
<accession>Q04PT7</accession>
<keyword id="KW-0687">Ribonucleoprotein</keyword>
<keyword id="KW-0689">Ribosomal protein</keyword>
<proteinExistence type="inferred from homology"/>
<dbReference type="EMBL" id="CP000350">
    <property type="protein sequence ID" value="ABJ77083.1"/>
    <property type="molecule type" value="Genomic_DNA"/>
</dbReference>
<dbReference type="RefSeq" id="WP_000918607.1">
    <property type="nucleotide sequence ID" value="NC_008510.1"/>
</dbReference>
<dbReference type="SMR" id="Q04PT7"/>
<dbReference type="GeneID" id="61172949"/>
<dbReference type="KEGG" id="lbj:LBJ_2660"/>
<dbReference type="HOGENOM" id="CLU_122625_1_3_12"/>
<dbReference type="Proteomes" id="UP000000656">
    <property type="component" value="Chromosome 1"/>
</dbReference>
<dbReference type="GO" id="GO:1990904">
    <property type="term" value="C:ribonucleoprotein complex"/>
    <property type="evidence" value="ECO:0007669"/>
    <property type="project" value="UniProtKB-KW"/>
</dbReference>
<dbReference type="GO" id="GO:0005840">
    <property type="term" value="C:ribosome"/>
    <property type="evidence" value="ECO:0007669"/>
    <property type="project" value="UniProtKB-KW"/>
</dbReference>
<dbReference type="GO" id="GO:0003735">
    <property type="term" value="F:structural constituent of ribosome"/>
    <property type="evidence" value="ECO:0007669"/>
    <property type="project" value="InterPro"/>
</dbReference>
<dbReference type="GO" id="GO:0000049">
    <property type="term" value="F:tRNA binding"/>
    <property type="evidence" value="ECO:0007669"/>
    <property type="project" value="UniProtKB-UniRule"/>
</dbReference>
<dbReference type="GO" id="GO:0006412">
    <property type="term" value="P:translation"/>
    <property type="evidence" value="ECO:0007669"/>
    <property type="project" value="UniProtKB-UniRule"/>
</dbReference>
<dbReference type="FunFam" id="3.30.70.600:FF:000001">
    <property type="entry name" value="30S ribosomal protein S10"/>
    <property type="match status" value="1"/>
</dbReference>
<dbReference type="Gene3D" id="3.30.70.600">
    <property type="entry name" value="Ribosomal protein S10 domain"/>
    <property type="match status" value="1"/>
</dbReference>
<dbReference type="HAMAP" id="MF_00508">
    <property type="entry name" value="Ribosomal_uS10"/>
    <property type="match status" value="1"/>
</dbReference>
<dbReference type="InterPro" id="IPR001848">
    <property type="entry name" value="Ribosomal_uS10"/>
</dbReference>
<dbReference type="InterPro" id="IPR018268">
    <property type="entry name" value="Ribosomal_uS10_CS"/>
</dbReference>
<dbReference type="InterPro" id="IPR027486">
    <property type="entry name" value="Ribosomal_uS10_dom"/>
</dbReference>
<dbReference type="InterPro" id="IPR036838">
    <property type="entry name" value="Ribosomal_uS10_dom_sf"/>
</dbReference>
<dbReference type="NCBIfam" id="NF001861">
    <property type="entry name" value="PRK00596.1"/>
    <property type="match status" value="1"/>
</dbReference>
<dbReference type="NCBIfam" id="TIGR01049">
    <property type="entry name" value="rpsJ_bact"/>
    <property type="match status" value="1"/>
</dbReference>
<dbReference type="PANTHER" id="PTHR11700">
    <property type="entry name" value="30S RIBOSOMAL PROTEIN S10 FAMILY MEMBER"/>
    <property type="match status" value="1"/>
</dbReference>
<dbReference type="Pfam" id="PF00338">
    <property type="entry name" value="Ribosomal_S10"/>
    <property type="match status" value="1"/>
</dbReference>
<dbReference type="PRINTS" id="PR00971">
    <property type="entry name" value="RIBOSOMALS10"/>
</dbReference>
<dbReference type="SMART" id="SM01403">
    <property type="entry name" value="Ribosomal_S10"/>
    <property type="match status" value="1"/>
</dbReference>
<dbReference type="SUPFAM" id="SSF54999">
    <property type="entry name" value="Ribosomal protein S10"/>
    <property type="match status" value="1"/>
</dbReference>
<dbReference type="PROSITE" id="PS00361">
    <property type="entry name" value="RIBOSOMAL_S10"/>
    <property type="match status" value="1"/>
</dbReference>
<reference key="1">
    <citation type="journal article" date="2006" name="Proc. Natl. Acad. Sci. U.S.A.">
        <title>Genome reduction in Leptospira borgpetersenii reflects limited transmission potential.</title>
        <authorList>
            <person name="Bulach D.M."/>
            <person name="Zuerner R.L."/>
            <person name="Wilson P."/>
            <person name="Seemann T."/>
            <person name="McGrath A."/>
            <person name="Cullen P.A."/>
            <person name="Davis J."/>
            <person name="Johnson M."/>
            <person name="Kuczek E."/>
            <person name="Alt D.P."/>
            <person name="Peterson-Burch B."/>
            <person name="Coppel R.L."/>
            <person name="Rood J.I."/>
            <person name="Davies J.K."/>
            <person name="Adler B."/>
        </authorList>
    </citation>
    <scope>NUCLEOTIDE SEQUENCE [LARGE SCALE GENOMIC DNA]</scope>
    <source>
        <strain>JB197</strain>
    </source>
</reference>